<geneLocation type="chloroplast"/>
<sequence length="118" mass="13080">MPTIKQLIRNTRQPIRNVTKSPALRGCPQRRGTCTRVYTITPKKPNSALRKVARVRLTSGFEITAYIPGIGHNSQEHSVVLVRGGRVKDLPGVRYHIVRGTLDAVGVKDRQQGRSSAL</sequence>
<protein>
    <recommendedName>
        <fullName evidence="2">Small ribosomal subunit protein uS12cz/uS12cy</fullName>
    </recommendedName>
    <alternativeName>
        <fullName evidence="3">30S ribosomal protein S12, chloroplastic</fullName>
    </alternativeName>
</protein>
<comment type="function">
    <text evidence="1">With S4 and S5 plays an important role in translational accuracy. Located at the interface of the 30S and 50S subunits (By similarity).</text>
</comment>
<comment type="subunit">
    <text evidence="1">Part of the 30S ribosomal subunit.</text>
</comment>
<comment type="subcellular location">
    <subcellularLocation>
        <location>Plastid</location>
        <location>Chloroplast</location>
    </subcellularLocation>
</comment>
<comment type="similarity">
    <text evidence="3">Belongs to the universal ribosomal protein uS12 family.</text>
</comment>
<comment type="sequence caution" evidence="3">
    <conflict type="erroneous gene model prediction">
        <sequence resource="EMBL-CDS" id="ABD47206"/>
    </conflict>
</comment>
<keyword id="KW-0150">Chloroplast</keyword>
<keyword id="KW-0934">Plastid</keyword>
<keyword id="KW-0687">Ribonucleoprotein</keyword>
<keyword id="KW-0689">Ribosomal protein</keyword>
<keyword id="KW-0694">RNA-binding</keyword>
<keyword id="KW-0699">rRNA-binding</keyword>
<evidence type="ECO:0000250" key="1"/>
<evidence type="ECO:0000255" key="2">
    <source>
        <dbReference type="HAMAP-Rule" id="MF_00403"/>
    </source>
</evidence>
<evidence type="ECO:0000305" key="3"/>
<gene>
    <name type="primary">rps12-A</name>
</gene>
<gene>
    <name type="primary">rps12-B</name>
</gene>
<proteinExistence type="inferred from homology"/>
<dbReference type="EMBL" id="DQ383815">
    <property type="protein sequence ID" value="ABD47125.1"/>
    <property type="molecule type" value="Genomic_DNA"/>
</dbReference>
<dbReference type="EMBL" id="DQ383815">
    <property type="protein sequence ID" value="ABD47206.1"/>
    <property type="status" value="ALT_SEQ"/>
    <property type="molecule type" value="Genomic_DNA"/>
</dbReference>
<dbReference type="SMR" id="Q1KXY0"/>
<dbReference type="KEGG" id="han:4055598"/>
<dbReference type="KEGG" id="han:4055607"/>
<dbReference type="OrthoDB" id="414309at2759"/>
<dbReference type="GO" id="GO:0009507">
    <property type="term" value="C:chloroplast"/>
    <property type="evidence" value="ECO:0007669"/>
    <property type="project" value="UniProtKB-SubCell"/>
</dbReference>
<dbReference type="GO" id="GO:0015935">
    <property type="term" value="C:small ribosomal subunit"/>
    <property type="evidence" value="ECO:0007669"/>
    <property type="project" value="InterPro"/>
</dbReference>
<dbReference type="GO" id="GO:0019843">
    <property type="term" value="F:rRNA binding"/>
    <property type="evidence" value="ECO:0007669"/>
    <property type="project" value="UniProtKB-UniRule"/>
</dbReference>
<dbReference type="GO" id="GO:0003735">
    <property type="term" value="F:structural constituent of ribosome"/>
    <property type="evidence" value="ECO:0007669"/>
    <property type="project" value="InterPro"/>
</dbReference>
<dbReference type="GO" id="GO:0006412">
    <property type="term" value="P:translation"/>
    <property type="evidence" value="ECO:0007669"/>
    <property type="project" value="UniProtKB-UniRule"/>
</dbReference>
<dbReference type="CDD" id="cd03368">
    <property type="entry name" value="Ribosomal_S12"/>
    <property type="match status" value="1"/>
</dbReference>
<dbReference type="FunFam" id="2.40.50.140:FF:000008">
    <property type="entry name" value="30S ribosomal protein S12, chloroplastic"/>
    <property type="match status" value="1"/>
</dbReference>
<dbReference type="Gene3D" id="2.40.50.140">
    <property type="entry name" value="Nucleic acid-binding proteins"/>
    <property type="match status" value="1"/>
</dbReference>
<dbReference type="HAMAP" id="MF_00403_B">
    <property type="entry name" value="Ribosomal_uS12_B"/>
    <property type="match status" value="1"/>
</dbReference>
<dbReference type="InterPro" id="IPR012340">
    <property type="entry name" value="NA-bd_OB-fold"/>
</dbReference>
<dbReference type="InterPro" id="IPR006032">
    <property type="entry name" value="Ribosomal_uS12"/>
</dbReference>
<dbReference type="InterPro" id="IPR005679">
    <property type="entry name" value="Ribosomal_uS12_bac"/>
</dbReference>
<dbReference type="NCBIfam" id="TIGR00981">
    <property type="entry name" value="rpsL_bact"/>
    <property type="match status" value="1"/>
</dbReference>
<dbReference type="PANTHER" id="PTHR11652">
    <property type="entry name" value="30S RIBOSOMAL PROTEIN S12 FAMILY MEMBER"/>
    <property type="match status" value="1"/>
</dbReference>
<dbReference type="Pfam" id="PF00164">
    <property type="entry name" value="Ribosom_S12_S23"/>
    <property type="match status" value="1"/>
</dbReference>
<dbReference type="PIRSF" id="PIRSF002133">
    <property type="entry name" value="Ribosomal_S12/S23"/>
    <property type="match status" value="1"/>
</dbReference>
<dbReference type="PRINTS" id="PR01034">
    <property type="entry name" value="RIBOSOMALS12"/>
</dbReference>
<dbReference type="SUPFAM" id="SSF50249">
    <property type="entry name" value="Nucleic acid-binding proteins"/>
    <property type="match status" value="1"/>
</dbReference>
<dbReference type="PROSITE" id="PS00055">
    <property type="entry name" value="RIBOSOMAL_S12"/>
    <property type="match status" value="1"/>
</dbReference>
<reference key="1">
    <citation type="submission" date="2006-01" db="EMBL/GenBank/DDBJ databases">
        <title>A comparison of the first two published chloroplast genomes in Asteraceae: Lactuca and Helianthus.</title>
        <authorList>
            <person name="Timme R.E."/>
            <person name="Kuehl J.V."/>
            <person name="Boore J.L."/>
            <person name="Jansen R.K."/>
        </authorList>
    </citation>
    <scope>NUCLEOTIDE SEQUENCE [LARGE SCALE GENOMIC DNA]</scope>
    <source>
        <strain>cv. HA383</strain>
    </source>
</reference>
<feature type="chain" id="PRO_0000276613" description="Small ribosomal subunit protein uS12cz/uS12cy">
    <location>
        <begin position="1"/>
        <end position="118"/>
    </location>
</feature>
<name>RR12_HELAN</name>
<organism>
    <name type="scientific">Helianthus annuus</name>
    <name type="common">Common sunflower</name>
    <dbReference type="NCBI Taxonomy" id="4232"/>
    <lineage>
        <taxon>Eukaryota</taxon>
        <taxon>Viridiplantae</taxon>
        <taxon>Streptophyta</taxon>
        <taxon>Embryophyta</taxon>
        <taxon>Tracheophyta</taxon>
        <taxon>Spermatophyta</taxon>
        <taxon>Magnoliopsida</taxon>
        <taxon>eudicotyledons</taxon>
        <taxon>Gunneridae</taxon>
        <taxon>Pentapetalae</taxon>
        <taxon>asterids</taxon>
        <taxon>campanulids</taxon>
        <taxon>Asterales</taxon>
        <taxon>Asteraceae</taxon>
        <taxon>Asteroideae</taxon>
        <taxon>Heliantheae alliance</taxon>
        <taxon>Heliantheae</taxon>
        <taxon>Helianthus</taxon>
    </lineage>
</organism>
<accession>Q1KXY0</accession>
<accession>Q1KXT5</accession>